<organism>
    <name type="scientific">Streptococcus pyogenes serotype M18 (strain MGAS8232)</name>
    <dbReference type="NCBI Taxonomy" id="186103"/>
    <lineage>
        <taxon>Bacteria</taxon>
        <taxon>Bacillati</taxon>
        <taxon>Bacillota</taxon>
        <taxon>Bacilli</taxon>
        <taxon>Lactobacillales</taxon>
        <taxon>Streptococcaceae</taxon>
        <taxon>Streptococcus</taxon>
    </lineage>
</organism>
<reference key="1">
    <citation type="journal article" date="2002" name="Proc. Natl. Acad. Sci. U.S.A.">
        <title>Genome sequence and comparative microarray analysis of serotype M18 group A Streptococcus strains associated with acute rheumatic fever outbreaks.</title>
        <authorList>
            <person name="Smoot J.C."/>
            <person name="Barbian K.D."/>
            <person name="Van Gompel J.J."/>
            <person name="Smoot L.M."/>
            <person name="Chaussee M.S."/>
            <person name="Sylva G.L."/>
            <person name="Sturdevant D.E."/>
            <person name="Ricklefs S.M."/>
            <person name="Porcella S.F."/>
            <person name="Parkins L.D."/>
            <person name="Beres S.B."/>
            <person name="Campbell D.S."/>
            <person name="Smith T.M."/>
            <person name="Zhang Q."/>
            <person name="Kapur V."/>
            <person name="Daly J.A."/>
            <person name="Veasy L.G."/>
            <person name="Musser J.M."/>
        </authorList>
    </citation>
    <scope>NUCLEOTIDE SEQUENCE [LARGE SCALE GENOMIC DNA]</scope>
    <source>
        <strain>MGAS8232</strain>
    </source>
</reference>
<evidence type="ECO:0000255" key="1">
    <source>
        <dbReference type="HAMAP-Rule" id="MF_00918"/>
    </source>
</evidence>
<accession>P67190</accession>
<accession>Q9A1E6</accession>
<keyword id="KW-0963">Cytoplasm</keyword>
<keyword id="KW-0238">DNA-binding</keyword>
<keyword id="KW-0804">Transcription</keyword>
<keyword id="KW-0805">Transcription regulation</keyword>
<dbReference type="EMBL" id="AE009949">
    <property type="protein sequence ID" value="AAL97070.1"/>
    <property type="molecule type" value="Genomic_DNA"/>
</dbReference>
<dbReference type="RefSeq" id="WP_002985979.1">
    <property type="nucleotide sequence ID" value="NC_003485.1"/>
</dbReference>
<dbReference type="SMR" id="P67190"/>
<dbReference type="KEGG" id="spm:spyM18_0311"/>
<dbReference type="HOGENOM" id="CLU_062974_2_0_9"/>
<dbReference type="GO" id="GO:0005829">
    <property type="term" value="C:cytosol"/>
    <property type="evidence" value="ECO:0007669"/>
    <property type="project" value="TreeGrafter"/>
</dbReference>
<dbReference type="GO" id="GO:0003677">
    <property type="term" value="F:DNA binding"/>
    <property type="evidence" value="ECO:0007669"/>
    <property type="project" value="UniProtKB-UniRule"/>
</dbReference>
<dbReference type="GO" id="GO:0006355">
    <property type="term" value="P:regulation of DNA-templated transcription"/>
    <property type="evidence" value="ECO:0007669"/>
    <property type="project" value="UniProtKB-UniRule"/>
</dbReference>
<dbReference type="FunFam" id="1.10.10.200:FF:000003">
    <property type="entry name" value="Probable transcriptional regulatory protein YeeN"/>
    <property type="match status" value="1"/>
</dbReference>
<dbReference type="FunFam" id="3.30.70.980:FF:000004">
    <property type="entry name" value="Probable transcriptional regulatory protein YeeN"/>
    <property type="match status" value="1"/>
</dbReference>
<dbReference type="Gene3D" id="1.10.10.200">
    <property type="match status" value="1"/>
</dbReference>
<dbReference type="Gene3D" id="3.30.70.980">
    <property type="match status" value="2"/>
</dbReference>
<dbReference type="HAMAP" id="MF_00693">
    <property type="entry name" value="Transcrip_reg_TACO1"/>
    <property type="match status" value="1"/>
</dbReference>
<dbReference type="HAMAP" id="MF_00918">
    <property type="entry name" value="Transcrip_reg_TACO1_YeeN"/>
    <property type="match status" value="1"/>
</dbReference>
<dbReference type="InterPro" id="IPR017856">
    <property type="entry name" value="Integrase-like_N"/>
</dbReference>
<dbReference type="InterPro" id="IPR048300">
    <property type="entry name" value="TACO1_YebC-like_2nd/3rd_dom"/>
</dbReference>
<dbReference type="InterPro" id="IPR049083">
    <property type="entry name" value="TACO1_YebC_N"/>
</dbReference>
<dbReference type="InterPro" id="IPR002876">
    <property type="entry name" value="Transcrip_reg_TACO1-like"/>
</dbReference>
<dbReference type="InterPro" id="IPR026564">
    <property type="entry name" value="Transcrip_reg_TACO1-like_dom3"/>
</dbReference>
<dbReference type="InterPro" id="IPR026562">
    <property type="entry name" value="Transcrip_reg_TACO1_YeeN"/>
</dbReference>
<dbReference type="InterPro" id="IPR029072">
    <property type="entry name" value="YebC-like"/>
</dbReference>
<dbReference type="NCBIfam" id="NF001030">
    <property type="entry name" value="PRK00110.1"/>
    <property type="match status" value="1"/>
</dbReference>
<dbReference type="NCBIfam" id="NF009044">
    <property type="entry name" value="PRK12378.1"/>
    <property type="match status" value="1"/>
</dbReference>
<dbReference type="NCBIfam" id="TIGR01033">
    <property type="entry name" value="YebC/PmpR family DNA-binding transcriptional regulator"/>
    <property type="match status" value="1"/>
</dbReference>
<dbReference type="PANTHER" id="PTHR12532">
    <property type="entry name" value="TRANSLATIONAL ACTIVATOR OF CYTOCHROME C OXIDASE 1"/>
    <property type="match status" value="1"/>
</dbReference>
<dbReference type="PANTHER" id="PTHR12532:SF0">
    <property type="entry name" value="TRANSLATIONAL ACTIVATOR OF CYTOCHROME C OXIDASE 1"/>
    <property type="match status" value="1"/>
</dbReference>
<dbReference type="Pfam" id="PF20772">
    <property type="entry name" value="TACO1_YebC_N"/>
    <property type="match status" value="1"/>
</dbReference>
<dbReference type="Pfam" id="PF01709">
    <property type="entry name" value="Transcrip_reg"/>
    <property type="match status" value="1"/>
</dbReference>
<dbReference type="SUPFAM" id="SSF75625">
    <property type="entry name" value="YebC-like"/>
    <property type="match status" value="1"/>
</dbReference>
<gene>
    <name type="ordered locus">spyM18_0311</name>
</gene>
<comment type="subcellular location">
    <subcellularLocation>
        <location evidence="1">Cytoplasm</location>
    </subcellularLocation>
</comment>
<comment type="similarity">
    <text evidence="1">Belongs to the TACO1 family. YeeN subfamily.</text>
</comment>
<protein>
    <recommendedName>
        <fullName evidence="1">Probable transcriptional regulatory protein spyM18_0311</fullName>
    </recommendedName>
</protein>
<name>Y311_STRP8</name>
<sequence>MGRKWANIVAKKTAKDGATSKVYAKFGVEIYVAAKQGEPDPELNTALKFVIDRAKQAQVPKHVIDKAIDKAKGNTDETFVEGRYEGFGPNGSMIIVDTLTSNVNRTAANVRTAYGKNGGNMGASGSVSYLFDKKGVIVFAGDDADSVFEQLLEADVDVDDVEAEEGTITVYTAPTDLHKGIQALRDNGVEEFQVTELEMIPQSEVVLEGDDLETFEKLIDALESDDDVQKVYHNVADF</sequence>
<proteinExistence type="inferred from homology"/>
<feature type="chain" id="PRO_0000175909" description="Probable transcriptional regulatory protein spyM18_0311">
    <location>
        <begin position="1"/>
        <end position="238"/>
    </location>
</feature>